<proteinExistence type="inferred from homology"/>
<keyword id="KW-0963">Cytoplasm</keyword>
<keyword id="KW-0489">Methyltransferase</keyword>
<keyword id="KW-0545">Nucleotide biosynthesis</keyword>
<keyword id="KW-0808">Transferase</keyword>
<gene>
    <name evidence="1" type="primary">thyA</name>
    <name type="ordered locus">lpp2927</name>
</gene>
<protein>
    <recommendedName>
        <fullName evidence="1">Thymidylate synthase</fullName>
        <shortName evidence="1">TS</shortName>
        <shortName evidence="1">TSase</shortName>
        <ecNumber evidence="1">2.1.1.45</ecNumber>
    </recommendedName>
</protein>
<comment type="function">
    <text evidence="1">Catalyzes the reductive methylation of 2'-deoxyuridine-5'-monophosphate (dUMP) to 2'-deoxythymidine-5'-monophosphate (dTMP) while utilizing 5,10-methylenetetrahydrofolate (mTHF) as the methyl donor and reductant in the reaction, yielding dihydrofolate (DHF) as a by-product. This enzymatic reaction provides an intracellular de novo source of dTMP, an essential precursor for DNA biosynthesis.</text>
</comment>
<comment type="catalytic activity">
    <reaction evidence="1">
        <text>dUMP + (6R)-5,10-methylene-5,6,7,8-tetrahydrofolate = 7,8-dihydrofolate + dTMP</text>
        <dbReference type="Rhea" id="RHEA:12104"/>
        <dbReference type="ChEBI" id="CHEBI:15636"/>
        <dbReference type="ChEBI" id="CHEBI:57451"/>
        <dbReference type="ChEBI" id="CHEBI:63528"/>
        <dbReference type="ChEBI" id="CHEBI:246422"/>
        <dbReference type="EC" id="2.1.1.45"/>
    </reaction>
</comment>
<comment type="pathway">
    <text evidence="1">Pyrimidine metabolism; dTTP biosynthesis.</text>
</comment>
<comment type="subunit">
    <text evidence="1">Homodimer.</text>
</comment>
<comment type="subcellular location">
    <subcellularLocation>
        <location evidence="1">Cytoplasm</location>
    </subcellularLocation>
</comment>
<comment type="similarity">
    <text evidence="1">Belongs to the thymidylate synthase family. Bacterial-type ThyA subfamily.</text>
</comment>
<reference key="1">
    <citation type="journal article" date="2004" name="Nat. Genet.">
        <title>Evidence in the Legionella pneumophila genome for exploitation of host cell functions and high genome plasticity.</title>
        <authorList>
            <person name="Cazalet C."/>
            <person name="Rusniok C."/>
            <person name="Brueggemann H."/>
            <person name="Zidane N."/>
            <person name="Magnier A."/>
            <person name="Ma L."/>
            <person name="Tichit M."/>
            <person name="Jarraud S."/>
            <person name="Bouchier C."/>
            <person name="Vandenesch F."/>
            <person name="Kunst F."/>
            <person name="Etienne J."/>
            <person name="Glaser P."/>
            <person name="Buchrieser C."/>
        </authorList>
    </citation>
    <scope>NUCLEOTIDE SEQUENCE [LARGE SCALE GENOMIC DNA]</scope>
    <source>
        <strain>Paris</strain>
    </source>
</reference>
<evidence type="ECO:0000255" key="1">
    <source>
        <dbReference type="HAMAP-Rule" id="MF_00008"/>
    </source>
</evidence>
<dbReference type="EC" id="2.1.1.45" evidence="1"/>
<dbReference type="EMBL" id="CR628336">
    <property type="protein sequence ID" value="CAH14080.1"/>
    <property type="molecule type" value="Genomic_DNA"/>
</dbReference>
<dbReference type="RefSeq" id="WP_015961866.1">
    <property type="nucleotide sequence ID" value="NC_006368.1"/>
</dbReference>
<dbReference type="SMR" id="Q5X119"/>
<dbReference type="KEGG" id="lpp:lpp2927"/>
<dbReference type="LegioList" id="lpp2927"/>
<dbReference type="HOGENOM" id="CLU_021669_0_0_6"/>
<dbReference type="UniPathway" id="UPA00575"/>
<dbReference type="GO" id="GO:0005829">
    <property type="term" value="C:cytosol"/>
    <property type="evidence" value="ECO:0007669"/>
    <property type="project" value="TreeGrafter"/>
</dbReference>
<dbReference type="GO" id="GO:0004799">
    <property type="term" value="F:thymidylate synthase activity"/>
    <property type="evidence" value="ECO:0007669"/>
    <property type="project" value="UniProtKB-UniRule"/>
</dbReference>
<dbReference type="GO" id="GO:0006231">
    <property type="term" value="P:dTMP biosynthetic process"/>
    <property type="evidence" value="ECO:0007669"/>
    <property type="project" value="UniProtKB-UniRule"/>
</dbReference>
<dbReference type="GO" id="GO:0006235">
    <property type="term" value="P:dTTP biosynthetic process"/>
    <property type="evidence" value="ECO:0007669"/>
    <property type="project" value="UniProtKB-UniRule"/>
</dbReference>
<dbReference type="GO" id="GO:0032259">
    <property type="term" value="P:methylation"/>
    <property type="evidence" value="ECO:0007669"/>
    <property type="project" value="UniProtKB-KW"/>
</dbReference>
<dbReference type="CDD" id="cd00351">
    <property type="entry name" value="TS_Pyrimidine_HMase"/>
    <property type="match status" value="1"/>
</dbReference>
<dbReference type="FunFam" id="3.30.572.10:FF:000001">
    <property type="entry name" value="Thymidylate synthase"/>
    <property type="match status" value="1"/>
</dbReference>
<dbReference type="Gene3D" id="3.30.572.10">
    <property type="entry name" value="Thymidylate synthase/dCMP hydroxymethylase domain"/>
    <property type="match status" value="1"/>
</dbReference>
<dbReference type="HAMAP" id="MF_00008">
    <property type="entry name" value="Thymidy_synth_bact"/>
    <property type="match status" value="1"/>
</dbReference>
<dbReference type="InterPro" id="IPR045097">
    <property type="entry name" value="Thymidate_synth/dCMP_Mease"/>
</dbReference>
<dbReference type="InterPro" id="IPR023451">
    <property type="entry name" value="Thymidate_synth/dCMP_Mease_dom"/>
</dbReference>
<dbReference type="InterPro" id="IPR036926">
    <property type="entry name" value="Thymidate_synth/dCMP_Mease_sf"/>
</dbReference>
<dbReference type="InterPro" id="IPR000398">
    <property type="entry name" value="Thymidylate_synthase"/>
</dbReference>
<dbReference type="InterPro" id="IPR020940">
    <property type="entry name" value="Thymidylate_synthase_AS"/>
</dbReference>
<dbReference type="NCBIfam" id="NF002497">
    <property type="entry name" value="PRK01827.1-3"/>
    <property type="match status" value="1"/>
</dbReference>
<dbReference type="NCBIfam" id="NF002499">
    <property type="entry name" value="PRK01827.1-5"/>
    <property type="match status" value="1"/>
</dbReference>
<dbReference type="NCBIfam" id="TIGR03284">
    <property type="entry name" value="thym_sym"/>
    <property type="match status" value="2"/>
</dbReference>
<dbReference type="PANTHER" id="PTHR11548:SF9">
    <property type="entry name" value="THYMIDYLATE SYNTHASE"/>
    <property type="match status" value="1"/>
</dbReference>
<dbReference type="PANTHER" id="PTHR11548">
    <property type="entry name" value="THYMIDYLATE SYNTHASE 1"/>
    <property type="match status" value="1"/>
</dbReference>
<dbReference type="Pfam" id="PF00303">
    <property type="entry name" value="Thymidylat_synt"/>
    <property type="match status" value="1"/>
</dbReference>
<dbReference type="PRINTS" id="PR00108">
    <property type="entry name" value="THYMDSNTHASE"/>
</dbReference>
<dbReference type="SUPFAM" id="SSF55831">
    <property type="entry name" value="Thymidylate synthase/dCMP hydroxymethylase"/>
    <property type="match status" value="1"/>
</dbReference>
<dbReference type="PROSITE" id="PS00091">
    <property type="entry name" value="THYMIDYLATE_SYNTHASE"/>
    <property type="match status" value="1"/>
</dbReference>
<accession>Q5X119</accession>
<organism>
    <name type="scientific">Legionella pneumophila (strain Paris)</name>
    <dbReference type="NCBI Taxonomy" id="297246"/>
    <lineage>
        <taxon>Bacteria</taxon>
        <taxon>Pseudomonadati</taxon>
        <taxon>Pseudomonadota</taxon>
        <taxon>Gammaproteobacteria</taxon>
        <taxon>Legionellales</taxon>
        <taxon>Legionellaceae</taxon>
        <taxon>Legionella</taxon>
    </lineage>
</organism>
<feature type="chain" id="PRO_0000140971" description="Thymidylate synthase">
    <location>
        <begin position="1"/>
        <end position="264"/>
    </location>
</feature>
<feature type="active site" description="Nucleophile" evidence="1">
    <location>
        <position position="146"/>
    </location>
</feature>
<feature type="binding site" description="in other chain" evidence="1">
    <location>
        <position position="21"/>
    </location>
    <ligand>
        <name>dUMP</name>
        <dbReference type="ChEBI" id="CHEBI:246422"/>
        <note>ligand shared between dimeric partners</note>
    </ligand>
</feature>
<feature type="binding site" evidence="1">
    <location>
        <position position="51"/>
    </location>
    <ligand>
        <name>(6R)-5,10-methylene-5,6,7,8-tetrahydrofolate</name>
        <dbReference type="ChEBI" id="CHEBI:15636"/>
    </ligand>
</feature>
<feature type="binding site" evidence="1">
    <location>
        <begin position="126"/>
        <end position="127"/>
    </location>
    <ligand>
        <name>dUMP</name>
        <dbReference type="ChEBI" id="CHEBI:246422"/>
        <note>ligand shared between dimeric partners</note>
    </ligand>
</feature>
<feature type="binding site" description="in other chain" evidence="1">
    <location>
        <begin position="166"/>
        <end position="169"/>
    </location>
    <ligand>
        <name>dUMP</name>
        <dbReference type="ChEBI" id="CHEBI:246422"/>
        <note>ligand shared between dimeric partners</note>
    </ligand>
</feature>
<feature type="binding site" evidence="1">
    <location>
        <position position="169"/>
    </location>
    <ligand>
        <name>(6R)-5,10-methylene-5,6,7,8-tetrahydrofolate</name>
        <dbReference type="ChEBI" id="CHEBI:15636"/>
    </ligand>
</feature>
<feature type="binding site" description="in other chain" evidence="1">
    <location>
        <position position="177"/>
    </location>
    <ligand>
        <name>dUMP</name>
        <dbReference type="ChEBI" id="CHEBI:246422"/>
        <note>ligand shared between dimeric partners</note>
    </ligand>
</feature>
<feature type="binding site" description="in other chain" evidence="1">
    <location>
        <begin position="207"/>
        <end position="209"/>
    </location>
    <ligand>
        <name>dUMP</name>
        <dbReference type="ChEBI" id="CHEBI:246422"/>
        <note>ligand shared between dimeric partners</note>
    </ligand>
</feature>
<feature type="binding site" evidence="1">
    <location>
        <position position="263"/>
    </location>
    <ligand>
        <name>(6R)-5,10-methylene-5,6,7,8-tetrahydrofolate</name>
        <dbReference type="ChEBI" id="CHEBI:15636"/>
    </ligand>
</feature>
<sequence>MKTYLQLLEHILQQGVEKSDRTGTGTLSVFGYQMRFDLTKGFPLVTTKKLHTRSIVHELLWFLRGDTNISYLKENGVTIWDEWADNNGDLGPVYGKQWRSWPTADGHTIDQLSDVVQQIKSNPDSRRLIVSAWNVGELDKMALMPCHALFQFYVANNKLSCQLYQRSADVFLGVPFNIASYSLLTHMVAQQCNLDVAEFIWTGGDCHLYLNHLEQAQIQLTREPLPLPSLTIKRKPASLFDYAYEDFEFLNYQSHPAIKAPIAV</sequence>
<name>TYSY_LEGPA</name>